<evidence type="ECO:0000255" key="1">
    <source>
        <dbReference type="HAMAP-Rule" id="MF_00185"/>
    </source>
</evidence>
<organism>
    <name type="scientific">Desulfitobacterium hafniense (strain Y51)</name>
    <dbReference type="NCBI Taxonomy" id="138119"/>
    <lineage>
        <taxon>Bacteria</taxon>
        <taxon>Bacillati</taxon>
        <taxon>Bacillota</taxon>
        <taxon>Clostridia</taxon>
        <taxon>Eubacteriales</taxon>
        <taxon>Desulfitobacteriaceae</taxon>
        <taxon>Desulfitobacterium</taxon>
    </lineage>
</organism>
<gene>
    <name evidence="1" type="primary">miaA</name>
    <name type="ordered locus">DSY1587</name>
</gene>
<keyword id="KW-0067">ATP-binding</keyword>
<keyword id="KW-0460">Magnesium</keyword>
<keyword id="KW-0547">Nucleotide-binding</keyword>
<keyword id="KW-1185">Reference proteome</keyword>
<keyword id="KW-0808">Transferase</keyword>
<keyword id="KW-0819">tRNA processing</keyword>
<name>MIAA_DESHY</name>
<protein>
    <recommendedName>
        <fullName evidence="1">tRNA dimethylallyltransferase</fullName>
        <ecNumber evidence="1">2.5.1.75</ecNumber>
    </recommendedName>
    <alternativeName>
        <fullName evidence="1">Dimethylallyl diphosphate:tRNA dimethylallyltransferase</fullName>
        <shortName evidence="1">DMAPP:tRNA dimethylallyltransferase</shortName>
        <shortName evidence="1">DMATase</shortName>
    </alternativeName>
    <alternativeName>
        <fullName evidence="1">Isopentenyl-diphosphate:tRNA isopentenyltransferase</fullName>
        <shortName evidence="1">IPP transferase</shortName>
        <shortName evidence="1">IPPT</shortName>
        <shortName evidence="1">IPTase</shortName>
    </alternativeName>
</protein>
<sequence length="314" mass="35245">MKPLIIIVGPTAVGKTALGVALAQALQGEIISGDSVQVYRKLDIGSAKPTLAEQGNIPHYLLDALEPAEPFTVAQFQTLANQAIQDIQSRGKVPIVVGGTGLYIRSLIDPFQFAEHGSESIRSFWTAFLSEQGKEALHQELAKRDPLSAQRLHPNDTVRIIRALEMCQLTGKPFSETRGNQDLNYPPLPPSTLYVGLTAPREIIYERINRRCEQMVAAGLIEETHNLIKEGYSPKLKPLQSIGYRHALLYLYGKVTLPEMMRIFQRDTRHFAKRQLTWFRRDPRVVWYDTYSGNLTNILESLIGTCSGMESRVE</sequence>
<accession>Q24X66</accession>
<reference key="1">
    <citation type="journal article" date="2006" name="J. Bacteriol.">
        <title>Complete genome sequence of the dehalorespiring bacterium Desulfitobacterium hafniense Y51 and comparison with Dehalococcoides ethenogenes 195.</title>
        <authorList>
            <person name="Nonaka H."/>
            <person name="Keresztes G."/>
            <person name="Shinoda Y."/>
            <person name="Ikenaga Y."/>
            <person name="Abe M."/>
            <person name="Naito K."/>
            <person name="Inatomi K."/>
            <person name="Furukawa K."/>
            <person name="Inui M."/>
            <person name="Yukawa H."/>
        </authorList>
    </citation>
    <scope>NUCLEOTIDE SEQUENCE [LARGE SCALE GENOMIC DNA]</scope>
    <source>
        <strain>Y51</strain>
    </source>
</reference>
<dbReference type="EC" id="2.5.1.75" evidence="1"/>
<dbReference type="EMBL" id="AP008230">
    <property type="protein sequence ID" value="BAE83376.1"/>
    <property type="molecule type" value="Genomic_DNA"/>
</dbReference>
<dbReference type="RefSeq" id="WP_005811584.1">
    <property type="nucleotide sequence ID" value="NC_007907.1"/>
</dbReference>
<dbReference type="SMR" id="Q24X66"/>
<dbReference type="STRING" id="138119.DSY1587"/>
<dbReference type="KEGG" id="dsy:DSY1587"/>
<dbReference type="eggNOG" id="COG0324">
    <property type="taxonomic scope" value="Bacteria"/>
</dbReference>
<dbReference type="HOGENOM" id="CLU_032616_0_1_9"/>
<dbReference type="Proteomes" id="UP000001946">
    <property type="component" value="Chromosome"/>
</dbReference>
<dbReference type="GO" id="GO:0005524">
    <property type="term" value="F:ATP binding"/>
    <property type="evidence" value="ECO:0007669"/>
    <property type="project" value="UniProtKB-UniRule"/>
</dbReference>
<dbReference type="GO" id="GO:0052381">
    <property type="term" value="F:tRNA dimethylallyltransferase activity"/>
    <property type="evidence" value="ECO:0007669"/>
    <property type="project" value="UniProtKB-UniRule"/>
</dbReference>
<dbReference type="GO" id="GO:0006400">
    <property type="term" value="P:tRNA modification"/>
    <property type="evidence" value="ECO:0007669"/>
    <property type="project" value="TreeGrafter"/>
</dbReference>
<dbReference type="FunFam" id="1.10.20.140:FF:000001">
    <property type="entry name" value="tRNA dimethylallyltransferase"/>
    <property type="match status" value="1"/>
</dbReference>
<dbReference type="Gene3D" id="1.10.20.140">
    <property type="match status" value="1"/>
</dbReference>
<dbReference type="Gene3D" id="3.40.50.300">
    <property type="entry name" value="P-loop containing nucleotide triphosphate hydrolases"/>
    <property type="match status" value="1"/>
</dbReference>
<dbReference type="HAMAP" id="MF_00185">
    <property type="entry name" value="IPP_trans"/>
    <property type="match status" value="1"/>
</dbReference>
<dbReference type="InterPro" id="IPR039657">
    <property type="entry name" value="Dimethylallyltransferase"/>
</dbReference>
<dbReference type="InterPro" id="IPR018022">
    <property type="entry name" value="IPT"/>
</dbReference>
<dbReference type="InterPro" id="IPR027417">
    <property type="entry name" value="P-loop_NTPase"/>
</dbReference>
<dbReference type="NCBIfam" id="TIGR00174">
    <property type="entry name" value="miaA"/>
    <property type="match status" value="1"/>
</dbReference>
<dbReference type="PANTHER" id="PTHR11088">
    <property type="entry name" value="TRNA DIMETHYLALLYLTRANSFERASE"/>
    <property type="match status" value="1"/>
</dbReference>
<dbReference type="PANTHER" id="PTHR11088:SF60">
    <property type="entry name" value="TRNA DIMETHYLALLYLTRANSFERASE"/>
    <property type="match status" value="1"/>
</dbReference>
<dbReference type="Pfam" id="PF01715">
    <property type="entry name" value="IPPT"/>
    <property type="match status" value="1"/>
</dbReference>
<dbReference type="SUPFAM" id="SSF52540">
    <property type="entry name" value="P-loop containing nucleoside triphosphate hydrolases"/>
    <property type="match status" value="2"/>
</dbReference>
<feature type="chain" id="PRO_0000377143" description="tRNA dimethylallyltransferase">
    <location>
        <begin position="1"/>
        <end position="314"/>
    </location>
</feature>
<feature type="region of interest" description="Interaction with substrate tRNA" evidence="1">
    <location>
        <begin position="34"/>
        <end position="37"/>
    </location>
</feature>
<feature type="binding site" evidence="1">
    <location>
        <begin position="9"/>
        <end position="16"/>
    </location>
    <ligand>
        <name>ATP</name>
        <dbReference type="ChEBI" id="CHEBI:30616"/>
    </ligand>
</feature>
<feature type="binding site" evidence="1">
    <location>
        <begin position="11"/>
        <end position="16"/>
    </location>
    <ligand>
        <name>substrate</name>
    </ligand>
</feature>
<feature type="site" description="Interaction with substrate tRNA" evidence="1">
    <location>
        <position position="100"/>
    </location>
</feature>
<feature type="site" description="Interaction with substrate tRNA" evidence="1">
    <location>
        <position position="122"/>
    </location>
</feature>
<proteinExistence type="inferred from homology"/>
<comment type="function">
    <text evidence="1">Catalyzes the transfer of a dimethylallyl group onto the adenine at position 37 in tRNAs that read codons beginning with uridine, leading to the formation of N6-(dimethylallyl)adenosine (i(6)A).</text>
</comment>
<comment type="catalytic activity">
    <reaction evidence="1">
        <text>adenosine(37) in tRNA + dimethylallyl diphosphate = N(6)-dimethylallyladenosine(37) in tRNA + diphosphate</text>
        <dbReference type="Rhea" id="RHEA:26482"/>
        <dbReference type="Rhea" id="RHEA-COMP:10162"/>
        <dbReference type="Rhea" id="RHEA-COMP:10375"/>
        <dbReference type="ChEBI" id="CHEBI:33019"/>
        <dbReference type="ChEBI" id="CHEBI:57623"/>
        <dbReference type="ChEBI" id="CHEBI:74411"/>
        <dbReference type="ChEBI" id="CHEBI:74415"/>
        <dbReference type="EC" id="2.5.1.75"/>
    </reaction>
</comment>
<comment type="cofactor">
    <cofactor evidence="1">
        <name>Mg(2+)</name>
        <dbReference type="ChEBI" id="CHEBI:18420"/>
    </cofactor>
</comment>
<comment type="subunit">
    <text evidence="1">Monomer.</text>
</comment>
<comment type="similarity">
    <text evidence="1">Belongs to the IPP transferase family.</text>
</comment>